<dbReference type="EMBL" id="JT013217">
    <property type="status" value="NOT_ANNOTATED_CDS"/>
    <property type="molecule type" value="mRNA"/>
</dbReference>
<dbReference type="SMR" id="B3EX02"/>
<dbReference type="OrthoDB" id="5958853at2759"/>
<dbReference type="GO" id="GO:0005576">
    <property type="term" value="C:extracellular region"/>
    <property type="evidence" value="ECO:0007669"/>
    <property type="project" value="UniProtKB-SubCell"/>
</dbReference>
<dbReference type="GO" id="GO:0016020">
    <property type="term" value="C:membrane"/>
    <property type="evidence" value="ECO:0007669"/>
    <property type="project" value="InterPro"/>
</dbReference>
<dbReference type="CDD" id="cd00063">
    <property type="entry name" value="FN3"/>
    <property type="match status" value="2"/>
</dbReference>
<dbReference type="CDD" id="cd06263">
    <property type="entry name" value="MAM"/>
    <property type="match status" value="1"/>
</dbReference>
<dbReference type="FunFam" id="2.60.40.10:FF:000028">
    <property type="entry name" value="Neuronal cell adhesion molecule"/>
    <property type="match status" value="1"/>
</dbReference>
<dbReference type="Gene3D" id="2.60.120.200">
    <property type="match status" value="1"/>
</dbReference>
<dbReference type="Gene3D" id="2.60.40.10">
    <property type="entry name" value="Immunoglobulins"/>
    <property type="match status" value="2"/>
</dbReference>
<dbReference type="InterPro" id="IPR013320">
    <property type="entry name" value="ConA-like_dom_sf"/>
</dbReference>
<dbReference type="InterPro" id="IPR003961">
    <property type="entry name" value="FN3_dom"/>
</dbReference>
<dbReference type="InterPro" id="IPR036116">
    <property type="entry name" value="FN3_sf"/>
</dbReference>
<dbReference type="InterPro" id="IPR013783">
    <property type="entry name" value="Ig-like_fold"/>
</dbReference>
<dbReference type="InterPro" id="IPR000998">
    <property type="entry name" value="MAM_dom"/>
</dbReference>
<dbReference type="InterPro" id="IPR051560">
    <property type="entry name" value="MAM_domain-containing"/>
</dbReference>
<dbReference type="InterPro" id="IPR035914">
    <property type="entry name" value="Sperma_CUB_dom_sf"/>
</dbReference>
<dbReference type="PANTHER" id="PTHR23282">
    <property type="entry name" value="APICAL ENDOSOMAL GLYCOPROTEIN PRECURSOR"/>
    <property type="match status" value="1"/>
</dbReference>
<dbReference type="PANTHER" id="PTHR23282:SF146">
    <property type="entry name" value="RT07201P-RELATED"/>
    <property type="match status" value="1"/>
</dbReference>
<dbReference type="Pfam" id="PF00041">
    <property type="entry name" value="fn3"/>
    <property type="match status" value="2"/>
</dbReference>
<dbReference type="Pfam" id="PF00629">
    <property type="entry name" value="MAM"/>
    <property type="match status" value="1"/>
</dbReference>
<dbReference type="SMART" id="SM00060">
    <property type="entry name" value="FN3"/>
    <property type="match status" value="2"/>
</dbReference>
<dbReference type="SUPFAM" id="SSF49899">
    <property type="entry name" value="Concanavalin A-like lectins/glucanases"/>
    <property type="match status" value="1"/>
</dbReference>
<dbReference type="SUPFAM" id="SSF49265">
    <property type="entry name" value="Fibronectin type III"/>
    <property type="match status" value="1"/>
</dbReference>
<dbReference type="SUPFAM" id="SSF49854">
    <property type="entry name" value="Spermadhesin, CUB domain"/>
    <property type="match status" value="1"/>
</dbReference>
<dbReference type="PROSITE" id="PS50853">
    <property type="entry name" value="FN3"/>
    <property type="match status" value="2"/>
</dbReference>
<dbReference type="PROSITE" id="PS50060">
    <property type="entry name" value="MAM_2"/>
    <property type="match status" value="1"/>
</dbReference>
<comment type="subcellular location">
    <subcellularLocation>
        <location evidence="6">Secreted</location>
    </subcellularLocation>
</comment>
<comment type="tissue specificity">
    <text evidence="3">Component of the acid-insoluble and acid-soluble organic matrix of the aragonitic skeleton (at protein level).</text>
</comment>
<organism>
    <name type="scientific">Acropora millepora</name>
    <name type="common">Staghorn coral</name>
    <name type="synonym">Heteropora millepora</name>
    <dbReference type="NCBI Taxonomy" id="45264"/>
    <lineage>
        <taxon>Eukaryota</taxon>
        <taxon>Metazoa</taxon>
        <taxon>Cnidaria</taxon>
        <taxon>Anthozoa</taxon>
        <taxon>Hexacorallia</taxon>
        <taxon>Scleractinia</taxon>
        <taxon>Astrocoeniina</taxon>
        <taxon>Acroporidae</taxon>
        <taxon>Acropora</taxon>
    </lineage>
</organism>
<feature type="chain" id="PRO_0000429547" description="MAM and fibronectin type III domain-containing protein 1">
    <location>
        <begin position="1" status="less than"/>
        <end position="422" status="greater than"/>
    </location>
</feature>
<feature type="domain" description="MAM" evidence="1">
    <location>
        <begin position="1" status="less than"/>
        <end position="75"/>
    </location>
</feature>
<feature type="domain" description="Fibronectin type-III 1" evidence="2">
    <location>
        <begin position="2"/>
        <end position="74"/>
    </location>
</feature>
<feature type="domain" description="Fibronectin type-III 2" evidence="2">
    <location>
        <begin position="196"/>
        <end position="286"/>
    </location>
</feature>
<feature type="domain" description="Fibronectin type-III 3" evidence="2">
    <location>
        <begin position="291"/>
        <end position="386"/>
    </location>
</feature>
<feature type="non-terminal residue" evidence="5">
    <location>
        <position position="1"/>
    </location>
</feature>
<feature type="non-terminal residue" evidence="5">
    <location>
        <position position="422"/>
    </location>
</feature>
<sequence>KFYYHMYGATINRLNVFNGNCTVFTKLGHQGNMWMYAEVTVFVQNNITFEGIRGYSYTGDIAIDDVSLMEGICAGCKENLTDSFGHLHITYSAKFSPDCTWTIRNSSISEPVAIISIEEVQFAYCRGYIKVFDGSGAQIFTRRGCNENHTSNTFLEITFQESQNVTIQVSLENNQSYARFGYGILEGGLESALLLPGWNASLENKTSTSLQLRWMDISSWLRDGLRFFVVTAKSSYSNLTVKGLFSSNTTFAEISGLDPYMAYDVSVVAVDGDGSQFKSTVLQARTDEWVPSRAPSVFVTSVTSTSVTVQWNPLPQQYHNGRLLGYRVFIRKTANSPFPLDESNVAVYNTSWVTLNNLKPGQPYEVNVSAFTSKGDGPRSTHYIVTTAVCGKRPTHSTLNCRRHSSTHQRLALASNATDARW</sequence>
<protein>
    <recommendedName>
        <fullName evidence="4">MAM and fibronectin type III domain-containing protein 1</fullName>
    </recommendedName>
</protein>
<proteinExistence type="evidence at protein level"/>
<accession>B3EX02</accession>
<keyword id="KW-0903">Direct protein sequencing</keyword>
<keyword id="KW-0677">Repeat</keyword>
<keyword id="KW-0964">Secreted</keyword>
<name>MFP1_ACRMI</name>
<reference evidence="5" key="1">
    <citation type="journal article" date="2012" name="Mol. Ecol.">
        <title>Whole transcriptome analysis of the coral Acropora millepora reveals complex responses to CO(2)-driven acidification during the initiation of calcification.</title>
        <authorList>
            <person name="Moya A."/>
            <person name="Huisman L."/>
            <person name="Ball E.E."/>
            <person name="Hayward D.C."/>
            <person name="Grasso L.C."/>
            <person name="Chua C.M."/>
            <person name="Woo H.N."/>
            <person name="Gattuso J.P."/>
            <person name="Foret S."/>
            <person name="Miller D.J."/>
        </authorList>
    </citation>
    <scope>NUCLEOTIDE SEQUENCE [MRNA]</scope>
</reference>
<reference evidence="5" key="2">
    <citation type="journal article" date="2013" name="Mol. Biol. Evol.">
        <title>The skeletal proteome of the coral Acropora millepora: the evolution of calcification by co-option and domain shuffling.</title>
        <authorList>
            <person name="Ramos-Silva P."/>
            <person name="Kaandorp J."/>
            <person name="Huisman L."/>
            <person name="Marie B."/>
            <person name="Zanella-Cleon I."/>
            <person name="Guichard N."/>
            <person name="Miller D.J."/>
            <person name="Marin F."/>
        </authorList>
    </citation>
    <scope>PROTEIN SEQUENCE OF 130-143 AND 285-294</scope>
    <scope>TISSUE SPECIFICITY</scope>
    <scope>IDENTIFICATION BY MASS SPECTROMETRY</scope>
</reference>
<evidence type="ECO:0000255" key="1">
    <source>
        <dbReference type="PROSITE-ProRule" id="PRU00128"/>
    </source>
</evidence>
<evidence type="ECO:0000255" key="2">
    <source>
        <dbReference type="PROSITE-ProRule" id="PRU00316"/>
    </source>
</evidence>
<evidence type="ECO:0000269" key="3">
    <source>
    </source>
</evidence>
<evidence type="ECO:0000303" key="4">
    <source>
    </source>
</evidence>
<evidence type="ECO:0000305" key="5"/>
<evidence type="ECO:0000305" key="6">
    <source>
    </source>
</evidence>